<name>RL22_EHRRG</name>
<feature type="chain" id="PRO_0000354466" description="Large ribosomal subunit protein uL22">
    <location>
        <begin position="1"/>
        <end position="114"/>
    </location>
</feature>
<keyword id="KW-0687">Ribonucleoprotein</keyword>
<keyword id="KW-0689">Ribosomal protein</keyword>
<keyword id="KW-0694">RNA-binding</keyword>
<keyword id="KW-0699">rRNA-binding</keyword>
<protein>
    <recommendedName>
        <fullName evidence="1">Large ribosomal subunit protein uL22</fullName>
    </recommendedName>
    <alternativeName>
        <fullName evidence="2">50S ribosomal protein L22</fullName>
    </alternativeName>
</protein>
<proteinExistence type="inferred from homology"/>
<organism>
    <name type="scientific">Ehrlichia ruminantium (strain Gardel)</name>
    <dbReference type="NCBI Taxonomy" id="302409"/>
    <lineage>
        <taxon>Bacteria</taxon>
        <taxon>Pseudomonadati</taxon>
        <taxon>Pseudomonadota</taxon>
        <taxon>Alphaproteobacteria</taxon>
        <taxon>Rickettsiales</taxon>
        <taxon>Anaplasmataceae</taxon>
        <taxon>Ehrlichia</taxon>
    </lineage>
</organism>
<accession>Q5FFU5</accession>
<reference key="1">
    <citation type="journal article" date="2006" name="J. Bacteriol.">
        <title>Comparative genomic analysis of three strains of Ehrlichia ruminantium reveals an active process of genome size plasticity.</title>
        <authorList>
            <person name="Frutos R."/>
            <person name="Viari A."/>
            <person name="Ferraz C."/>
            <person name="Morgat A."/>
            <person name="Eychenie S."/>
            <person name="Kandassamy Y."/>
            <person name="Chantal I."/>
            <person name="Bensaid A."/>
            <person name="Coissac E."/>
            <person name="Vachiery N."/>
            <person name="Demaille J."/>
            <person name="Martinez D."/>
        </authorList>
    </citation>
    <scope>NUCLEOTIDE SEQUENCE [LARGE SCALE GENOMIC DNA]</scope>
    <source>
        <strain>Gardel</strain>
    </source>
</reference>
<sequence length="114" mass="12863">MSKVLVEAKGMGLRSTPYKLNLVADLIRGKPVSVAVMYLKFCKKKSARYISKVLKSAIANAQANYSVDVDNLYIKEVLVGKSFSLRRIHARARGKACRVYKHYGNVIIKLFERV</sequence>
<evidence type="ECO:0000255" key="1">
    <source>
        <dbReference type="HAMAP-Rule" id="MF_01331"/>
    </source>
</evidence>
<evidence type="ECO:0000305" key="2"/>
<comment type="function">
    <text evidence="1">This protein binds specifically to 23S rRNA; its binding is stimulated by other ribosomal proteins, e.g. L4, L17, and L20. It is important during the early stages of 50S assembly. It makes multiple contacts with different domains of the 23S rRNA in the assembled 50S subunit and ribosome (By similarity).</text>
</comment>
<comment type="function">
    <text evidence="1">The globular domain of the protein is located near the polypeptide exit tunnel on the outside of the subunit, while an extended beta-hairpin is found that lines the wall of the exit tunnel in the center of the 70S ribosome.</text>
</comment>
<comment type="subunit">
    <text evidence="1">Part of the 50S ribosomal subunit.</text>
</comment>
<comment type="similarity">
    <text evidence="1">Belongs to the universal ribosomal protein uL22 family.</text>
</comment>
<comment type="sequence caution" evidence="2">
    <conflict type="erroneous initiation">
        <sequence resource="EMBL-CDS" id="CAI28076"/>
    </conflict>
</comment>
<gene>
    <name evidence="1" type="primary">rplV</name>
    <name type="ordered locus">ERGA_CDS_06240</name>
</gene>
<dbReference type="EMBL" id="CR925677">
    <property type="protein sequence ID" value="CAI28076.1"/>
    <property type="status" value="ALT_INIT"/>
    <property type="molecule type" value="Genomic_DNA"/>
</dbReference>
<dbReference type="RefSeq" id="WP_011155284.1">
    <property type="nucleotide sequence ID" value="NC_006831.1"/>
</dbReference>
<dbReference type="SMR" id="Q5FFU5"/>
<dbReference type="GeneID" id="33057594"/>
<dbReference type="KEGG" id="erg:ERGA_CDS_06240"/>
<dbReference type="HOGENOM" id="CLU_083987_3_0_5"/>
<dbReference type="Proteomes" id="UP000000533">
    <property type="component" value="Chromosome"/>
</dbReference>
<dbReference type="GO" id="GO:0022625">
    <property type="term" value="C:cytosolic large ribosomal subunit"/>
    <property type="evidence" value="ECO:0007669"/>
    <property type="project" value="TreeGrafter"/>
</dbReference>
<dbReference type="GO" id="GO:0019843">
    <property type="term" value="F:rRNA binding"/>
    <property type="evidence" value="ECO:0007669"/>
    <property type="project" value="UniProtKB-UniRule"/>
</dbReference>
<dbReference type="GO" id="GO:0003735">
    <property type="term" value="F:structural constituent of ribosome"/>
    <property type="evidence" value="ECO:0007669"/>
    <property type="project" value="InterPro"/>
</dbReference>
<dbReference type="GO" id="GO:0006412">
    <property type="term" value="P:translation"/>
    <property type="evidence" value="ECO:0007669"/>
    <property type="project" value="UniProtKB-UniRule"/>
</dbReference>
<dbReference type="CDD" id="cd00336">
    <property type="entry name" value="Ribosomal_L22"/>
    <property type="match status" value="1"/>
</dbReference>
<dbReference type="Gene3D" id="3.90.470.10">
    <property type="entry name" value="Ribosomal protein L22/L17"/>
    <property type="match status" value="1"/>
</dbReference>
<dbReference type="HAMAP" id="MF_01331_B">
    <property type="entry name" value="Ribosomal_uL22_B"/>
    <property type="match status" value="1"/>
</dbReference>
<dbReference type="InterPro" id="IPR001063">
    <property type="entry name" value="Ribosomal_uL22"/>
</dbReference>
<dbReference type="InterPro" id="IPR005727">
    <property type="entry name" value="Ribosomal_uL22_bac/chlpt-type"/>
</dbReference>
<dbReference type="InterPro" id="IPR047867">
    <property type="entry name" value="Ribosomal_uL22_bac/org-type"/>
</dbReference>
<dbReference type="InterPro" id="IPR018260">
    <property type="entry name" value="Ribosomal_uL22_CS"/>
</dbReference>
<dbReference type="InterPro" id="IPR036394">
    <property type="entry name" value="Ribosomal_uL22_sf"/>
</dbReference>
<dbReference type="NCBIfam" id="TIGR01044">
    <property type="entry name" value="rplV_bact"/>
    <property type="match status" value="1"/>
</dbReference>
<dbReference type="PANTHER" id="PTHR13501">
    <property type="entry name" value="CHLOROPLAST 50S RIBOSOMAL PROTEIN L22-RELATED"/>
    <property type="match status" value="1"/>
</dbReference>
<dbReference type="PANTHER" id="PTHR13501:SF8">
    <property type="entry name" value="LARGE RIBOSOMAL SUBUNIT PROTEIN UL22M"/>
    <property type="match status" value="1"/>
</dbReference>
<dbReference type="Pfam" id="PF00237">
    <property type="entry name" value="Ribosomal_L22"/>
    <property type="match status" value="1"/>
</dbReference>
<dbReference type="SUPFAM" id="SSF54843">
    <property type="entry name" value="Ribosomal protein L22"/>
    <property type="match status" value="1"/>
</dbReference>
<dbReference type="PROSITE" id="PS00464">
    <property type="entry name" value="RIBOSOMAL_L22"/>
    <property type="match status" value="1"/>
</dbReference>